<accession>A2CJE5</accession>
<name>VM2IA_CROAT</name>
<feature type="chain" id="PRO_0000406573" description="Disintegrin atroxatin">
    <location>
        <begin position="1" status="less than"/>
        <end position="61"/>
    </location>
</feature>
<feature type="domain" description="Disintegrin" evidence="3">
    <location>
        <begin position="1" status="less than"/>
        <end position="61"/>
    </location>
</feature>
<feature type="short sequence motif" description="Cell attachment site" evidence="3">
    <location>
        <begin position="39"/>
        <end position="41"/>
    </location>
</feature>
<feature type="disulfide bond" evidence="2">
    <location>
        <begin position="3"/>
        <end position="26"/>
    </location>
</feature>
<feature type="disulfide bond" evidence="2">
    <location>
        <begin position="9"/>
        <end position="23"/>
    </location>
</feature>
<feature type="disulfide bond" evidence="2">
    <location>
        <begin position="17"/>
        <end position="23"/>
    </location>
</feature>
<feature type="disulfide bond" evidence="2">
    <location>
        <begin position="22"/>
        <end position="47"/>
    </location>
</feature>
<feature type="disulfide bond" evidence="2 3">
    <location>
        <begin position="35"/>
        <end position="54"/>
    </location>
</feature>
<feature type="non-terminal residue" evidence="5">
    <location>
        <position position="1"/>
    </location>
</feature>
<protein>
    <recommendedName>
        <fullName evidence="4">Disintegrin atroxatin</fullName>
    </recommendedName>
</protein>
<comment type="function">
    <text evidence="1">Inhibits fibrinogen interaction with platelets. Acts by binding to alpha-IIb/beta-3 (ITGA2B/ITGB3) on the platelet surface and inhibits aggregation induced by ADP, thrombin, platelet-activating factor and collagen (By similarity).</text>
</comment>
<comment type="subunit">
    <text evidence="1">Monomer (disintegrin).</text>
</comment>
<comment type="subcellular location">
    <subcellularLocation>
        <location evidence="6">Secreted</location>
    </subcellularLocation>
</comment>
<comment type="tissue specificity">
    <text evidence="6">Expressed by the venom gland.</text>
</comment>
<comment type="miscellaneous">
    <text>The disintegrin belongs to the medium disintegrin subfamily.</text>
</comment>
<comment type="similarity">
    <text evidence="5">Belongs to the venom metalloproteinase (M12B) family. P-II subfamily. P-IIa sub-subfamily.</text>
</comment>
<sequence length="61" mass="6467">NPCCDAATCKVTPGSQCAEGLCCDQCKFMKEGTVCRPARGDWNDDTCTGQSADCPRKGIYG</sequence>
<dbReference type="EMBL" id="DQ676502">
    <property type="protein sequence ID" value="ABG77586.1"/>
    <property type="molecule type" value="mRNA"/>
</dbReference>
<dbReference type="SMR" id="A2CJE5"/>
<dbReference type="GO" id="GO:0005576">
    <property type="term" value="C:extracellular region"/>
    <property type="evidence" value="ECO:0007669"/>
    <property type="project" value="UniProtKB-SubCell"/>
</dbReference>
<dbReference type="GO" id="GO:0005886">
    <property type="term" value="C:plasma membrane"/>
    <property type="evidence" value="ECO:0007669"/>
    <property type="project" value="TreeGrafter"/>
</dbReference>
<dbReference type="GO" id="GO:0090729">
    <property type="term" value="F:toxin activity"/>
    <property type="evidence" value="ECO:0007669"/>
    <property type="project" value="UniProtKB-KW"/>
</dbReference>
<dbReference type="FunFam" id="4.10.70.10:FF:000005">
    <property type="entry name" value="Zinc metalloproteinase/disintegrin"/>
    <property type="match status" value="1"/>
</dbReference>
<dbReference type="Gene3D" id="4.10.70.10">
    <property type="entry name" value="Disintegrin domain"/>
    <property type="match status" value="1"/>
</dbReference>
<dbReference type="InterPro" id="IPR018358">
    <property type="entry name" value="Disintegrin_CS"/>
</dbReference>
<dbReference type="InterPro" id="IPR001762">
    <property type="entry name" value="Disintegrin_dom"/>
</dbReference>
<dbReference type="InterPro" id="IPR036436">
    <property type="entry name" value="Disintegrin_dom_sf"/>
</dbReference>
<dbReference type="PANTHER" id="PTHR11905">
    <property type="entry name" value="ADAM A DISINTEGRIN AND METALLOPROTEASE DOMAIN"/>
    <property type="match status" value="1"/>
</dbReference>
<dbReference type="PANTHER" id="PTHR11905:SF32">
    <property type="entry name" value="DISINTEGRIN AND METALLOPROTEINASE DOMAIN-CONTAINING PROTEIN 28"/>
    <property type="match status" value="1"/>
</dbReference>
<dbReference type="Pfam" id="PF00200">
    <property type="entry name" value="Disintegrin"/>
    <property type="match status" value="1"/>
</dbReference>
<dbReference type="PRINTS" id="PR00289">
    <property type="entry name" value="DISINTEGRIN"/>
</dbReference>
<dbReference type="SMART" id="SM00050">
    <property type="entry name" value="DISIN"/>
    <property type="match status" value="1"/>
</dbReference>
<dbReference type="SUPFAM" id="SSF57552">
    <property type="entry name" value="Blood coagulation inhibitor (disintegrin)"/>
    <property type="match status" value="1"/>
</dbReference>
<dbReference type="PROSITE" id="PS00427">
    <property type="entry name" value="DISINTEGRIN_1"/>
    <property type="match status" value="1"/>
</dbReference>
<dbReference type="PROSITE" id="PS50214">
    <property type="entry name" value="DISINTEGRIN_2"/>
    <property type="match status" value="1"/>
</dbReference>
<proteinExistence type="evidence at transcript level"/>
<keyword id="KW-1217">Cell adhesion impairing toxin</keyword>
<keyword id="KW-1015">Disulfide bond</keyword>
<keyword id="KW-1199">Hemostasis impairing toxin</keyword>
<keyword id="KW-1201">Platelet aggregation inhibiting toxin</keyword>
<keyword id="KW-0964">Secreted</keyword>
<keyword id="KW-0800">Toxin</keyword>
<evidence type="ECO:0000250" key="1"/>
<evidence type="ECO:0000250" key="2">
    <source>
        <dbReference type="UniProtKB" id="Q0NZX5"/>
    </source>
</evidence>
<evidence type="ECO:0000255" key="3">
    <source>
        <dbReference type="PROSITE-ProRule" id="PRU00068"/>
    </source>
</evidence>
<evidence type="ECO:0000303" key="4">
    <source>
    </source>
</evidence>
<evidence type="ECO:0000305" key="5"/>
<evidence type="ECO:0000305" key="6">
    <source>
    </source>
</evidence>
<reference key="1">
    <citation type="journal article" date="2007" name="Gene">
        <title>Molecular evolution of PIII-SVMP and RGD disintegrin genes from the genus Crotalus.</title>
        <authorList>
            <person name="Soto J.G."/>
            <person name="White S.A."/>
            <person name="Reyes S.R."/>
            <person name="Regalado R."/>
            <person name="Sanchez E.E."/>
            <person name="Perez J.C."/>
        </authorList>
    </citation>
    <scope>NUCLEOTIDE SEQUENCE [MRNA]</scope>
    <source>
        <tissue>Venom gland</tissue>
    </source>
</reference>
<organism>
    <name type="scientific">Crotalus atrox</name>
    <name type="common">Western diamondback rattlesnake</name>
    <dbReference type="NCBI Taxonomy" id="8730"/>
    <lineage>
        <taxon>Eukaryota</taxon>
        <taxon>Metazoa</taxon>
        <taxon>Chordata</taxon>
        <taxon>Craniata</taxon>
        <taxon>Vertebrata</taxon>
        <taxon>Euteleostomi</taxon>
        <taxon>Lepidosauria</taxon>
        <taxon>Squamata</taxon>
        <taxon>Bifurcata</taxon>
        <taxon>Unidentata</taxon>
        <taxon>Episquamata</taxon>
        <taxon>Toxicofera</taxon>
        <taxon>Serpentes</taxon>
        <taxon>Colubroidea</taxon>
        <taxon>Viperidae</taxon>
        <taxon>Crotalinae</taxon>
        <taxon>Crotalus</taxon>
    </lineage>
</organism>